<keyword id="KW-0963">Cytoplasm</keyword>
<keyword id="KW-0460">Magnesium</keyword>
<keyword id="KW-0479">Metal-binding</keyword>
<keyword id="KW-0566">Pantothenate biosynthesis</keyword>
<keyword id="KW-1185">Reference proteome</keyword>
<keyword id="KW-0808">Transferase</keyword>
<proteinExistence type="inferred from homology"/>
<sequence length="264" mass="28184">MKPTTIASLQKCKQEKKRFATITAYDYSFAKLFADEGLNVILVGDSLGMTVQGHDSTLPVTVADIAYHTTAVRRGAPNGLLLADLPFMAYATPEQAFENAATVMRAGANMVKIEGGEWLVETVKMLTERAVPVCGHLGLTPQSVNIFGGYKVQGRGDEASDRLLSDALALEAAGAQLLVLECVPVELAKRITEALVIPVIGIGAGNVTDGQILVMHDAFGITGGHIPKFAKNFLAETGDIRAAVRQYKAEVESGVYPGEEHSFH</sequence>
<evidence type="ECO:0000255" key="1">
    <source>
        <dbReference type="HAMAP-Rule" id="MF_00156"/>
    </source>
</evidence>
<comment type="function">
    <text evidence="1">Catalyzes the reversible reaction in which hydroxymethyl group from 5,10-methylenetetrahydrofolate is transferred onto alpha-ketoisovalerate to form ketopantoate.</text>
</comment>
<comment type="catalytic activity">
    <reaction evidence="1">
        <text>3-methyl-2-oxobutanoate + (6R)-5,10-methylene-5,6,7,8-tetrahydrofolate + H2O = 2-dehydropantoate + (6S)-5,6,7,8-tetrahydrofolate</text>
        <dbReference type="Rhea" id="RHEA:11824"/>
        <dbReference type="ChEBI" id="CHEBI:11561"/>
        <dbReference type="ChEBI" id="CHEBI:11851"/>
        <dbReference type="ChEBI" id="CHEBI:15377"/>
        <dbReference type="ChEBI" id="CHEBI:15636"/>
        <dbReference type="ChEBI" id="CHEBI:57453"/>
        <dbReference type="EC" id="2.1.2.11"/>
    </reaction>
</comment>
<comment type="cofactor">
    <cofactor evidence="1">
        <name>Mg(2+)</name>
        <dbReference type="ChEBI" id="CHEBI:18420"/>
    </cofactor>
    <text evidence="1">Binds 1 Mg(2+) ion per subunit.</text>
</comment>
<comment type="pathway">
    <text evidence="1">Cofactor biosynthesis; (R)-pantothenate biosynthesis; (R)-pantoate from 3-methyl-2-oxobutanoate: step 1/2.</text>
</comment>
<comment type="subunit">
    <text evidence="1">Homodecamer; pentamer of dimers.</text>
</comment>
<comment type="subcellular location">
    <subcellularLocation>
        <location evidence="1">Cytoplasm</location>
    </subcellularLocation>
</comment>
<comment type="similarity">
    <text evidence="1">Belongs to the PanB family.</text>
</comment>
<name>PANB_SHIDS</name>
<dbReference type="EC" id="2.1.2.11" evidence="1"/>
<dbReference type="EMBL" id="CP000034">
    <property type="protein sequence ID" value="ABB60388.1"/>
    <property type="molecule type" value="Genomic_DNA"/>
</dbReference>
<dbReference type="RefSeq" id="WP_000805467.1">
    <property type="nucleotide sequence ID" value="NC_007606.1"/>
</dbReference>
<dbReference type="RefSeq" id="YP_401877.1">
    <property type="nucleotide sequence ID" value="NC_007606.1"/>
</dbReference>
<dbReference type="SMR" id="Q32JW9"/>
<dbReference type="STRING" id="300267.SDY_0154"/>
<dbReference type="EnsemblBacteria" id="ABB60388">
    <property type="protein sequence ID" value="ABB60388"/>
    <property type="gene ID" value="SDY_0154"/>
</dbReference>
<dbReference type="KEGG" id="sdy:SDY_0154"/>
<dbReference type="PATRIC" id="fig|300267.13.peg.174"/>
<dbReference type="HOGENOM" id="CLU_036645_1_0_6"/>
<dbReference type="UniPathway" id="UPA00028">
    <property type="reaction ID" value="UER00003"/>
</dbReference>
<dbReference type="Proteomes" id="UP000002716">
    <property type="component" value="Chromosome"/>
</dbReference>
<dbReference type="GO" id="GO:0005737">
    <property type="term" value="C:cytoplasm"/>
    <property type="evidence" value="ECO:0007669"/>
    <property type="project" value="UniProtKB-SubCell"/>
</dbReference>
<dbReference type="GO" id="GO:0003864">
    <property type="term" value="F:3-methyl-2-oxobutanoate hydroxymethyltransferase activity"/>
    <property type="evidence" value="ECO:0007669"/>
    <property type="project" value="UniProtKB-UniRule"/>
</dbReference>
<dbReference type="GO" id="GO:0000287">
    <property type="term" value="F:magnesium ion binding"/>
    <property type="evidence" value="ECO:0007669"/>
    <property type="project" value="TreeGrafter"/>
</dbReference>
<dbReference type="GO" id="GO:0015940">
    <property type="term" value="P:pantothenate biosynthetic process"/>
    <property type="evidence" value="ECO:0007669"/>
    <property type="project" value="UniProtKB-UniRule"/>
</dbReference>
<dbReference type="CDD" id="cd06557">
    <property type="entry name" value="KPHMT-like"/>
    <property type="match status" value="1"/>
</dbReference>
<dbReference type="FunFam" id="3.20.20.60:FF:000003">
    <property type="entry name" value="3-methyl-2-oxobutanoate hydroxymethyltransferase"/>
    <property type="match status" value="1"/>
</dbReference>
<dbReference type="Gene3D" id="3.20.20.60">
    <property type="entry name" value="Phosphoenolpyruvate-binding domains"/>
    <property type="match status" value="1"/>
</dbReference>
<dbReference type="HAMAP" id="MF_00156">
    <property type="entry name" value="PanB"/>
    <property type="match status" value="1"/>
</dbReference>
<dbReference type="InterPro" id="IPR003700">
    <property type="entry name" value="Pantoate_hydroxy_MeTrfase"/>
</dbReference>
<dbReference type="InterPro" id="IPR015813">
    <property type="entry name" value="Pyrv/PenolPyrv_kinase-like_dom"/>
</dbReference>
<dbReference type="InterPro" id="IPR040442">
    <property type="entry name" value="Pyrv_kinase-like_dom_sf"/>
</dbReference>
<dbReference type="NCBIfam" id="TIGR00222">
    <property type="entry name" value="panB"/>
    <property type="match status" value="1"/>
</dbReference>
<dbReference type="NCBIfam" id="NF001452">
    <property type="entry name" value="PRK00311.1"/>
    <property type="match status" value="1"/>
</dbReference>
<dbReference type="PANTHER" id="PTHR20881">
    <property type="entry name" value="3-METHYL-2-OXOBUTANOATE HYDROXYMETHYLTRANSFERASE"/>
    <property type="match status" value="1"/>
</dbReference>
<dbReference type="PANTHER" id="PTHR20881:SF0">
    <property type="entry name" value="3-METHYL-2-OXOBUTANOATE HYDROXYMETHYLTRANSFERASE"/>
    <property type="match status" value="1"/>
</dbReference>
<dbReference type="Pfam" id="PF02548">
    <property type="entry name" value="Pantoate_transf"/>
    <property type="match status" value="1"/>
</dbReference>
<dbReference type="PIRSF" id="PIRSF000388">
    <property type="entry name" value="Pantoate_hydroxy_MeTrfase"/>
    <property type="match status" value="1"/>
</dbReference>
<dbReference type="SUPFAM" id="SSF51621">
    <property type="entry name" value="Phosphoenolpyruvate/pyruvate domain"/>
    <property type="match status" value="1"/>
</dbReference>
<organism>
    <name type="scientific">Shigella dysenteriae serotype 1 (strain Sd197)</name>
    <dbReference type="NCBI Taxonomy" id="300267"/>
    <lineage>
        <taxon>Bacteria</taxon>
        <taxon>Pseudomonadati</taxon>
        <taxon>Pseudomonadota</taxon>
        <taxon>Gammaproteobacteria</taxon>
        <taxon>Enterobacterales</taxon>
        <taxon>Enterobacteriaceae</taxon>
        <taxon>Shigella</taxon>
    </lineage>
</organism>
<feature type="chain" id="PRO_0000297376" description="3-methyl-2-oxobutanoate hydroxymethyltransferase">
    <location>
        <begin position="1"/>
        <end position="264"/>
    </location>
</feature>
<feature type="active site" description="Proton acceptor" evidence="1">
    <location>
        <position position="181"/>
    </location>
</feature>
<feature type="binding site" evidence="1">
    <location>
        <begin position="45"/>
        <end position="46"/>
    </location>
    <ligand>
        <name>3-methyl-2-oxobutanoate</name>
        <dbReference type="ChEBI" id="CHEBI:11851"/>
    </ligand>
</feature>
<feature type="binding site" evidence="1">
    <location>
        <position position="45"/>
    </location>
    <ligand>
        <name>Mg(2+)</name>
        <dbReference type="ChEBI" id="CHEBI:18420"/>
    </ligand>
</feature>
<feature type="binding site" evidence="1">
    <location>
        <position position="84"/>
    </location>
    <ligand>
        <name>3-methyl-2-oxobutanoate</name>
        <dbReference type="ChEBI" id="CHEBI:11851"/>
    </ligand>
</feature>
<feature type="binding site" evidence="1">
    <location>
        <position position="84"/>
    </location>
    <ligand>
        <name>Mg(2+)</name>
        <dbReference type="ChEBI" id="CHEBI:18420"/>
    </ligand>
</feature>
<feature type="binding site" evidence="1">
    <location>
        <position position="112"/>
    </location>
    <ligand>
        <name>3-methyl-2-oxobutanoate</name>
        <dbReference type="ChEBI" id="CHEBI:11851"/>
    </ligand>
</feature>
<feature type="binding site" evidence="1">
    <location>
        <position position="114"/>
    </location>
    <ligand>
        <name>Mg(2+)</name>
        <dbReference type="ChEBI" id="CHEBI:18420"/>
    </ligand>
</feature>
<protein>
    <recommendedName>
        <fullName evidence="1">3-methyl-2-oxobutanoate hydroxymethyltransferase</fullName>
        <ecNumber evidence="1">2.1.2.11</ecNumber>
    </recommendedName>
    <alternativeName>
        <fullName evidence="1">Ketopantoate hydroxymethyltransferase</fullName>
        <shortName evidence="1">KPHMT</shortName>
    </alternativeName>
</protein>
<gene>
    <name evidence="1" type="primary">panB</name>
    <name type="ordered locus">SDY_0154</name>
</gene>
<reference key="1">
    <citation type="journal article" date="2005" name="Nucleic Acids Res.">
        <title>Genome dynamics and diversity of Shigella species, the etiologic agents of bacillary dysentery.</title>
        <authorList>
            <person name="Yang F."/>
            <person name="Yang J."/>
            <person name="Zhang X."/>
            <person name="Chen L."/>
            <person name="Jiang Y."/>
            <person name="Yan Y."/>
            <person name="Tang X."/>
            <person name="Wang J."/>
            <person name="Xiong Z."/>
            <person name="Dong J."/>
            <person name="Xue Y."/>
            <person name="Zhu Y."/>
            <person name="Xu X."/>
            <person name="Sun L."/>
            <person name="Chen S."/>
            <person name="Nie H."/>
            <person name="Peng J."/>
            <person name="Xu J."/>
            <person name="Wang Y."/>
            <person name="Yuan Z."/>
            <person name="Wen Y."/>
            <person name="Yao Z."/>
            <person name="Shen Y."/>
            <person name="Qiang B."/>
            <person name="Hou Y."/>
            <person name="Yu J."/>
            <person name="Jin Q."/>
        </authorList>
    </citation>
    <scope>NUCLEOTIDE SEQUENCE [LARGE SCALE GENOMIC DNA]</scope>
    <source>
        <strain>Sd197</strain>
    </source>
</reference>
<accession>Q32JW9</accession>